<comment type="function">
    <text evidence="1">Catalyzes the specific phosphorylation of the 3-hydroxyl group of shikimic acid using ATP as a cosubstrate.</text>
</comment>
<comment type="catalytic activity">
    <reaction evidence="1">
        <text>shikimate + ATP = 3-phosphoshikimate + ADP + H(+)</text>
        <dbReference type="Rhea" id="RHEA:13121"/>
        <dbReference type="ChEBI" id="CHEBI:15378"/>
        <dbReference type="ChEBI" id="CHEBI:30616"/>
        <dbReference type="ChEBI" id="CHEBI:36208"/>
        <dbReference type="ChEBI" id="CHEBI:145989"/>
        <dbReference type="ChEBI" id="CHEBI:456216"/>
        <dbReference type="EC" id="2.7.1.71"/>
    </reaction>
</comment>
<comment type="cofactor">
    <cofactor evidence="1">
        <name>Mg(2+)</name>
        <dbReference type="ChEBI" id="CHEBI:18420"/>
    </cofactor>
    <text evidence="1">Binds 1 Mg(2+) ion per subunit.</text>
</comment>
<comment type="pathway">
    <text evidence="1">Metabolic intermediate biosynthesis; chorismate biosynthesis; chorismate from D-erythrose 4-phosphate and phosphoenolpyruvate: step 5/7.</text>
</comment>
<comment type="subunit">
    <text evidence="1">Monomer.</text>
</comment>
<comment type="subcellular location">
    <subcellularLocation>
        <location evidence="1">Cytoplasm</location>
    </subcellularLocation>
</comment>
<comment type="domain">
    <text evidence="1">The LID domain closes over the active site upon ATP binding.</text>
</comment>
<comment type="similarity">
    <text evidence="1">Belongs to the shikimate kinase family. AroL subfamily.</text>
</comment>
<organism>
    <name type="scientific">Escherichia coli (strain UTI89 / UPEC)</name>
    <dbReference type="NCBI Taxonomy" id="364106"/>
    <lineage>
        <taxon>Bacteria</taxon>
        <taxon>Pseudomonadati</taxon>
        <taxon>Pseudomonadota</taxon>
        <taxon>Gammaproteobacteria</taxon>
        <taxon>Enterobacterales</taxon>
        <taxon>Enterobacteriaceae</taxon>
        <taxon>Escherichia</taxon>
    </lineage>
</organism>
<proteinExistence type="inferred from homology"/>
<accession>Q1RFF6</accession>
<gene>
    <name evidence="1" type="primary">aroL</name>
    <name type="ordered locus">UTI89_C0407</name>
</gene>
<dbReference type="EC" id="2.7.1.71" evidence="1"/>
<dbReference type="EMBL" id="CP000243">
    <property type="protein sequence ID" value="ABE05908.1"/>
    <property type="molecule type" value="Genomic_DNA"/>
</dbReference>
<dbReference type="RefSeq" id="WP_000193383.1">
    <property type="nucleotide sequence ID" value="NZ_CP064825.1"/>
</dbReference>
<dbReference type="SMR" id="Q1RFF6"/>
<dbReference type="KEGG" id="eci:UTI89_C0407"/>
<dbReference type="HOGENOM" id="CLU_057607_4_3_6"/>
<dbReference type="UniPathway" id="UPA00053">
    <property type="reaction ID" value="UER00088"/>
</dbReference>
<dbReference type="Proteomes" id="UP000001952">
    <property type="component" value="Chromosome"/>
</dbReference>
<dbReference type="GO" id="GO:0005829">
    <property type="term" value="C:cytosol"/>
    <property type="evidence" value="ECO:0007669"/>
    <property type="project" value="TreeGrafter"/>
</dbReference>
<dbReference type="GO" id="GO:0005524">
    <property type="term" value="F:ATP binding"/>
    <property type="evidence" value="ECO:0007669"/>
    <property type="project" value="UniProtKB-UniRule"/>
</dbReference>
<dbReference type="GO" id="GO:0000287">
    <property type="term" value="F:magnesium ion binding"/>
    <property type="evidence" value="ECO:0007669"/>
    <property type="project" value="UniProtKB-UniRule"/>
</dbReference>
<dbReference type="GO" id="GO:0004765">
    <property type="term" value="F:shikimate kinase activity"/>
    <property type="evidence" value="ECO:0007669"/>
    <property type="project" value="UniProtKB-UniRule"/>
</dbReference>
<dbReference type="GO" id="GO:0008652">
    <property type="term" value="P:amino acid biosynthetic process"/>
    <property type="evidence" value="ECO:0007669"/>
    <property type="project" value="UniProtKB-KW"/>
</dbReference>
<dbReference type="GO" id="GO:0009073">
    <property type="term" value="P:aromatic amino acid family biosynthetic process"/>
    <property type="evidence" value="ECO:0007669"/>
    <property type="project" value="UniProtKB-KW"/>
</dbReference>
<dbReference type="GO" id="GO:0009423">
    <property type="term" value="P:chorismate biosynthetic process"/>
    <property type="evidence" value="ECO:0007669"/>
    <property type="project" value="UniProtKB-UniRule"/>
</dbReference>
<dbReference type="CDD" id="cd00464">
    <property type="entry name" value="SK"/>
    <property type="match status" value="1"/>
</dbReference>
<dbReference type="FunFam" id="3.40.50.300:FF:000408">
    <property type="entry name" value="Shikimate kinase 2"/>
    <property type="match status" value="1"/>
</dbReference>
<dbReference type="Gene3D" id="3.40.50.300">
    <property type="entry name" value="P-loop containing nucleotide triphosphate hydrolases"/>
    <property type="match status" value="1"/>
</dbReference>
<dbReference type="HAMAP" id="MF_00109">
    <property type="entry name" value="Shikimate_kinase"/>
    <property type="match status" value="1"/>
</dbReference>
<dbReference type="HAMAP" id="MF_01269">
    <property type="entry name" value="Shikimate_kinase_2"/>
    <property type="match status" value="1"/>
</dbReference>
<dbReference type="InterPro" id="IPR027417">
    <property type="entry name" value="P-loop_NTPase"/>
</dbReference>
<dbReference type="InterPro" id="IPR031322">
    <property type="entry name" value="Shikimate/glucono_kinase"/>
</dbReference>
<dbReference type="InterPro" id="IPR000623">
    <property type="entry name" value="Shikimate_kinase/TSH1"/>
</dbReference>
<dbReference type="InterPro" id="IPR027544">
    <property type="entry name" value="Shikimate_kinase_2"/>
</dbReference>
<dbReference type="InterPro" id="IPR023000">
    <property type="entry name" value="Shikimate_kinase_CS"/>
</dbReference>
<dbReference type="NCBIfam" id="NF002988">
    <property type="entry name" value="PRK03731.1"/>
    <property type="match status" value="1"/>
</dbReference>
<dbReference type="PANTHER" id="PTHR21087">
    <property type="entry name" value="SHIKIMATE KINASE"/>
    <property type="match status" value="1"/>
</dbReference>
<dbReference type="PANTHER" id="PTHR21087:SF21">
    <property type="entry name" value="SHIKIMATE KINASE 2"/>
    <property type="match status" value="1"/>
</dbReference>
<dbReference type="Pfam" id="PF01202">
    <property type="entry name" value="SKI"/>
    <property type="match status" value="1"/>
</dbReference>
<dbReference type="PRINTS" id="PR01100">
    <property type="entry name" value="SHIKIMTKNASE"/>
</dbReference>
<dbReference type="SUPFAM" id="SSF52540">
    <property type="entry name" value="P-loop containing nucleoside triphosphate hydrolases"/>
    <property type="match status" value="1"/>
</dbReference>
<dbReference type="PROSITE" id="PS01128">
    <property type="entry name" value="SHIKIMATE_KINASE"/>
    <property type="match status" value="1"/>
</dbReference>
<sequence length="174" mass="19136">MTQPLFLIGPRGCGKTTVGMALADSLNRRFVDTDLWLQSQLNMTVAEIVEREEWAGFRARETAALEAVTAPSTVIATGGGIILTEFNRHFMQNNGIVVYLCAPVSVLVNRLQAAPEEDLRPTLTGKPLSEEVQEVLEERDALYREVAHIIIDATNEPSQVISEIRSALAQTINC</sequence>
<name>AROL_ECOUT</name>
<feature type="chain" id="PRO_1000067331" description="Shikimate kinase 2">
    <location>
        <begin position="1"/>
        <end position="174"/>
    </location>
</feature>
<feature type="region of interest" description="LID domain">
    <location>
        <begin position="112"/>
        <end position="126"/>
    </location>
</feature>
<feature type="binding site" evidence="1">
    <location>
        <begin position="12"/>
        <end position="17"/>
    </location>
    <ligand>
        <name>ATP</name>
        <dbReference type="ChEBI" id="CHEBI:30616"/>
    </ligand>
</feature>
<feature type="binding site" evidence="1">
    <location>
        <position position="16"/>
    </location>
    <ligand>
        <name>Mg(2+)</name>
        <dbReference type="ChEBI" id="CHEBI:18420"/>
    </ligand>
</feature>
<feature type="binding site" evidence="1">
    <location>
        <position position="32"/>
    </location>
    <ligand>
        <name>Mg(2+)</name>
        <dbReference type="ChEBI" id="CHEBI:18420"/>
    </ligand>
</feature>
<feature type="binding site" evidence="1">
    <location>
        <position position="34"/>
    </location>
    <ligand>
        <name>substrate</name>
    </ligand>
</feature>
<feature type="binding site" evidence="1">
    <location>
        <position position="58"/>
    </location>
    <ligand>
        <name>substrate</name>
    </ligand>
</feature>
<feature type="binding site" evidence="1">
    <location>
        <position position="79"/>
    </location>
    <ligand>
        <name>substrate</name>
    </ligand>
</feature>
<feature type="binding site" evidence="1">
    <location>
        <position position="120"/>
    </location>
    <ligand>
        <name>ATP</name>
        <dbReference type="ChEBI" id="CHEBI:30616"/>
    </ligand>
</feature>
<feature type="binding site" evidence="1">
    <location>
        <position position="139"/>
    </location>
    <ligand>
        <name>substrate</name>
    </ligand>
</feature>
<evidence type="ECO:0000255" key="1">
    <source>
        <dbReference type="HAMAP-Rule" id="MF_01269"/>
    </source>
</evidence>
<reference key="1">
    <citation type="journal article" date="2006" name="Proc. Natl. Acad. Sci. U.S.A.">
        <title>Identification of genes subject to positive selection in uropathogenic strains of Escherichia coli: a comparative genomics approach.</title>
        <authorList>
            <person name="Chen S.L."/>
            <person name="Hung C.-S."/>
            <person name="Xu J."/>
            <person name="Reigstad C.S."/>
            <person name="Magrini V."/>
            <person name="Sabo A."/>
            <person name="Blasiar D."/>
            <person name="Bieri T."/>
            <person name="Meyer R.R."/>
            <person name="Ozersky P."/>
            <person name="Armstrong J.R."/>
            <person name="Fulton R.S."/>
            <person name="Latreille J.P."/>
            <person name="Spieth J."/>
            <person name="Hooton T.M."/>
            <person name="Mardis E.R."/>
            <person name="Hultgren S.J."/>
            <person name="Gordon J.I."/>
        </authorList>
    </citation>
    <scope>NUCLEOTIDE SEQUENCE [LARGE SCALE GENOMIC DNA]</scope>
    <source>
        <strain>UTI89 / UPEC</strain>
    </source>
</reference>
<keyword id="KW-0028">Amino-acid biosynthesis</keyword>
<keyword id="KW-0057">Aromatic amino acid biosynthesis</keyword>
<keyword id="KW-0067">ATP-binding</keyword>
<keyword id="KW-0963">Cytoplasm</keyword>
<keyword id="KW-0418">Kinase</keyword>
<keyword id="KW-0460">Magnesium</keyword>
<keyword id="KW-0479">Metal-binding</keyword>
<keyword id="KW-0547">Nucleotide-binding</keyword>
<keyword id="KW-0808">Transferase</keyword>
<protein>
    <recommendedName>
        <fullName evidence="1">Shikimate kinase 2</fullName>
        <shortName evidence="1">SK 2</shortName>
        <ecNumber evidence="1">2.7.1.71</ecNumber>
    </recommendedName>
</protein>